<dbReference type="EMBL" id="U89350">
    <property type="protein sequence ID" value="AAC16756.1"/>
    <property type="molecule type" value="Genomic_DNA"/>
</dbReference>
<dbReference type="EMBL" id="AAFI02000099">
    <property type="protein sequence ID" value="EAL63797.1"/>
    <property type="molecule type" value="Genomic_DNA"/>
</dbReference>
<dbReference type="RefSeq" id="XP_637310.1">
    <property type="nucleotide sequence ID" value="XM_632218.1"/>
</dbReference>
<dbReference type="SMR" id="O60950"/>
<dbReference type="FunCoup" id="O60950">
    <property type="interactions" value="30"/>
</dbReference>
<dbReference type="STRING" id="44689.O60950"/>
<dbReference type="GlyGen" id="O60950">
    <property type="glycosylation" value="2 sites"/>
</dbReference>
<dbReference type="PaxDb" id="44689-DDB0191338"/>
<dbReference type="EnsemblProtists" id="EAL63797">
    <property type="protein sequence ID" value="EAL63797"/>
    <property type="gene ID" value="DDB_G0287271"/>
</dbReference>
<dbReference type="GeneID" id="8626047"/>
<dbReference type="KEGG" id="ddi:DDB_G0287271"/>
<dbReference type="dictyBase" id="DDB_G0287271">
    <property type="gene designation" value="gol"/>
</dbReference>
<dbReference type="VEuPathDB" id="AmoebaDB:DDB_G0287271"/>
<dbReference type="eggNOG" id="ENOG502SR14">
    <property type="taxonomic scope" value="Eukaryota"/>
</dbReference>
<dbReference type="HOGENOM" id="CLU_471290_0_0_1"/>
<dbReference type="InParanoid" id="O60950"/>
<dbReference type="OMA" id="MMNDMSS"/>
<dbReference type="PRO" id="PR:O60950"/>
<dbReference type="Proteomes" id="UP000002195">
    <property type="component" value="Chromosome 5"/>
</dbReference>
<dbReference type="GO" id="GO:0031164">
    <property type="term" value="C:contractile vacuolar membrane"/>
    <property type="evidence" value="ECO:0007669"/>
    <property type="project" value="UniProtKB-SubCell"/>
</dbReference>
<dbReference type="GO" id="GO:0000331">
    <property type="term" value="C:contractile vacuole"/>
    <property type="evidence" value="ECO:0000314"/>
    <property type="project" value="dictyBase"/>
</dbReference>
<dbReference type="GO" id="GO:0005789">
    <property type="term" value="C:endoplasmic reticulum membrane"/>
    <property type="evidence" value="ECO:0000304"/>
    <property type="project" value="dictyBase"/>
</dbReference>
<dbReference type="GO" id="GO:0010008">
    <property type="term" value="C:endosome membrane"/>
    <property type="evidence" value="ECO:0000314"/>
    <property type="project" value="dictyBase"/>
</dbReference>
<dbReference type="GO" id="GO:0005794">
    <property type="term" value="C:Golgi apparatus"/>
    <property type="evidence" value="ECO:0000314"/>
    <property type="project" value="dictyBase"/>
</dbReference>
<dbReference type="GO" id="GO:0000139">
    <property type="term" value="C:Golgi membrane"/>
    <property type="evidence" value="ECO:0000304"/>
    <property type="project" value="dictyBase"/>
</dbReference>
<dbReference type="CDD" id="cd14488">
    <property type="entry name" value="CBM6-CBM35-CBM36_like_2"/>
    <property type="match status" value="1"/>
</dbReference>
<dbReference type="Gene3D" id="3.40.710.10">
    <property type="entry name" value="DD-peptidase/beta-lactamase superfamily"/>
    <property type="match status" value="1"/>
</dbReference>
<dbReference type="InterPro" id="IPR012338">
    <property type="entry name" value="Beta-lactam/transpept-like"/>
</dbReference>
<dbReference type="InterPro" id="IPR033803">
    <property type="entry name" value="CBM6/CBM35/CBM36-like_2"/>
</dbReference>
<dbReference type="PANTHER" id="PTHR42264">
    <property type="entry name" value="EPHRIN_REC_LIKE DOMAIN-CONTAINING PROTEIN"/>
    <property type="match status" value="1"/>
</dbReference>
<dbReference type="PANTHER" id="PTHR42264:SF6">
    <property type="entry name" value="TRANSMEMBRANE PROTEIN"/>
    <property type="match status" value="1"/>
</dbReference>
<dbReference type="Pfam" id="PF25275">
    <property type="entry name" value="Golvesin_C"/>
    <property type="match status" value="1"/>
</dbReference>
<dbReference type="SUPFAM" id="SSF56601">
    <property type="entry name" value="beta-lactamase/transpeptidase-like"/>
    <property type="match status" value="1"/>
</dbReference>
<evidence type="ECO:0000255" key="1"/>
<evidence type="ECO:0000256" key="2">
    <source>
        <dbReference type="SAM" id="MobiDB-lite"/>
    </source>
</evidence>
<evidence type="ECO:0000269" key="3">
    <source>
    </source>
</evidence>
<evidence type="ECO:0000269" key="4">
    <source>
    </source>
</evidence>
<evidence type="ECO:0000269" key="5">
    <source>
    </source>
</evidence>
<evidence type="ECO:0000305" key="6">
    <source>
    </source>
</evidence>
<keyword id="KW-0967">Endosome</keyword>
<keyword id="KW-0333">Golgi apparatus</keyword>
<keyword id="KW-0472">Membrane</keyword>
<keyword id="KW-1185">Reference proteome</keyword>
<keyword id="KW-0735">Signal-anchor</keyword>
<keyword id="KW-0812">Transmembrane</keyword>
<keyword id="KW-1133">Transmembrane helix</keyword>
<keyword id="KW-0926">Vacuole</keyword>
<accession>O60950</accession>
<accession>Q54KK7</accession>
<comment type="subcellular location">
    <subcellularLocation>
        <location evidence="4">Contractile vacuole membrane</location>
        <topology evidence="4">Single-pass type III membrane protein</topology>
    </subcellularLocation>
    <subcellularLocation>
        <location evidence="6">Endosome membrane</location>
        <topology evidence="6">Single-pass type III membrane protein</topology>
    </subcellularLocation>
    <subcellularLocation>
        <location evidence="6">Golgi apparatus membrane</location>
        <topology evidence="6">Single-pass type III membrane protein</topology>
    </subcellularLocation>
</comment>
<comment type="disruption phenotype">
    <text evidence="3">Cells are 5-fold more resistant to the antitumor agent cisplatin than are wild-type cells.</text>
</comment>
<comment type="miscellaneous">
    <text>The protein is normally retrieved from exocytic vesicles before exocytosis occurs.</text>
</comment>
<comment type="miscellaneous">
    <text>GFP-tagging of golvesin at its C-terminus traps it within the Golgi apparatus, making this a useful marker for this compartment.</text>
</comment>
<feature type="chain" id="PRO_0000328117" description="Golvesin">
    <location>
        <begin position="1"/>
        <end position="579"/>
    </location>
</feature>
<feature type="topological domain" description="Lumenal" evidence="1">
    <location>
        <begin position="1"/>
        <end position="94"/>
    </location>
</feature>
<feature type="transmembrane region" description="Helical; Signal-anchor for type III membrane protein" evidence="1">
    <location>
        <begin position="95"/>
        <end position="115"/>
    </location>
</feature>
<feature type="topological domain" description="Cytoplasmic" evidence="1">
    <location>
        <begin position="116"/>
        <end position="578"/>
    </location>
</feature>
<feature type="region of interest" description="Disordered" evidence="2">
    <location>
        <begin position="1"/>
        <end position="79"/>
    </location>
</feature>
<feature type="region of interest" description="Required for targeting to the plasma membrane">
    <location>
        <begin position="1"/>
        <end position="75"/>
    </location>
</feature>
<feature type="region of interest" description="Required for membrane targeting">
    <location>
        <begin position="95"/>
        <end position="118"/>
    </location>
</feature>
<feature type="region of interest" description="Required for transfer to endosomes and contractile vacuoles; the protein is trapped in the Golgi">
    <location>
        <begin position="559"/>
        <end position="579"/>
    </location>
</feature>
<feature type="compositionally biased region" description="Low complexity" evidence="2">
    <location>
        <begin position="11"/>
        <end position="77"/>
    </location>
</feature>
<feature type="mutagenesis site" description="Loss of endosomal retrieval; the protein is targeted to the plasma membrane." evidence="5">
    <original>LL</original>
    <variation>AA</variation>
    <location>
        <begin position="9"/>
        <end position="10"/>
    </location>
</feature>
<sequence>MTSVNEHSLLINNNENNDNNNNHINQRNNKNNINNRNNIGVNNNNNNNNNNNNNNINNNNNNNNNNNNNNNNNNNSNTGKIYLRKKKKWNFRKKILPMIVILIITAIVVCLVVFSLPFDSSNTIYNQSPFVIKEDDNLLELAMKSRQNLLNIHGNQTISKLDFAILVSNPIGYWQLATFNGKNNSNPQQTLFLPLLAAAVNWCMNQNNDPHCLQTAAGPMMNDMSSIHAGILMDIITDAPNQEFQTSNSTGFQSWLTKRESIELFLNSFNLLGNQTIINKFYPSNSGPTATWGEGLIQKLMGDNQMCPYDSALLMLNLVKSGILSEGQSYMTDLISRQTFSTFTSIGFGLPPGTTLHSVLGTSSSTKDLNEIAHLVLPNGGEMIFSIFSNGYENFGHAPYQSSILGNFAGDLIRSLGIDIGCPNKIVMTSQDKNCTVTGAPWTLDTSIQAYNNSFLYISGGVTPTSTVTWSFTINVTGLYEVCVWFPNGDLHTSVSYKVEPGDGMIYYFPVDQVHYGARWIRLDSFFIVAGNQPIISLSNRGIDPSKTVVADSVKLTRWPSSKGIPGFSNDFVIAESPE</sequence>
<reference key="1">
    <citation type="journal article" date="2000" name="Biol. Cell">
        <title>Golvesin-GFP fusions as distinct markers for Golgi and post-Golgi vesicles in Dictyostelium cells.</title>
        <authorList>
            <person name="Schneider N."/>
            <person name="Schwartz J.M."/>
            <person name="Koehler J."/>
            <person name="Becker M."/>
            <person name="Schwarz H."/>
            <person name="Gerisch G."/>
        </authorList>
    </citation>
    <scope>NUCLEOTIDE SEQUENCE [GENOMIC DNA]</scope>
    <scope>SUBCELLULAR LOCATION</scope>
    <scope>TOPOLOGY</scope>
    <source>
        <strain>AX2</strain>
    </source>
</reference>
<reference key="2">
    <citation type="journal article" date="2005" name="Nature">
        <title>The genome of the social amoeba Dictyostelium discoideum.</title>
        <authorList>
            <person name="Eichinger L."/>
            <person name="Pachebat J.A."/>
            <person name="Gloeckner G."/>
            <person name="Rajandream M.A."/>
            <person name="Sucgang R."/>
            <person name="Berriman M."/>
            <person name="Song J."/>
            <person name="Olsen R."/>
            <person name="Szafranski K."/>
            <person name="Xu Q."/>
            <person name="Tunggal B."/>
            <person name="Kummerfeld S."/>
            <person name="Madera M."/>
            <person name="Konfortov B.A."/>
            <person name="Rivero F."/>
            <person name="Bankier A.T."/>
            <person name="Lehmann R."/>
            <person name="Hamlin N."/>
            <person name="Davies R."/>
            <person name="Gaudet P."/>
            <person name="Fey P."/>
            <person name="Pilcher K."/>
            <person name="Chen G."/>
            <person name="Saunders D."/>
            <person name="Sodergren E.J."/>
            <person name="Davis P."/>
            <person name="Kerhornou A."/>
            <person name="Nie X."/>
            <person name="Hall N."/>
            <person name="Anjard C."/>
            <person name="Hemphill L."/>
            <person name="Bason N."/>
            <person name="Farbrother P."/>
            <person name="Desany B."/>
            <person name="Just E."/>
            <person name="Morio T."/>
            <person name="Rost R."/>
            <person name="Churcher C.M."/>
            <person name="Cooper J."/>
            <person name="Haydock S."/>
            <person name="van Driessche N."/>
            <person name="Cronin A."/>
            <person name="Goodhead I."/>
            <person name="Muzny D.M."/>
            <person name="Mourier T."/>
            <person name="Pain A."/>
            <person name="Lu M."/>
            <person name="Harper D."/>
            <person name="Lindsay R."/>
            <person name="Hauser H."/>
            <person name="James K.D."/>
            <person name="Quiles M."/>
            <person name="Madan Babu M."/>
            <person name="Saito T."/>
            <person name="Buchrieser C."/>
            <person name="Wardroper A."/>
            <person name="Felder M."/>
            <person name="Thangavelu M."/>
            <person name="Johnson D."/>
            <person name="Knights A."/>
            <person name="Loulseged H."/>
            <person name="Mungall K.L."/>
            <person name="Oliver K."/>
            <person name="Price C."/>
            <person name="Quail M.A."/>
            <person name="Urushihara H."/>
            <person name="Hernandez J."/>
            <person name="Rabbinowitsch E."/>
            <person name="Steffen D."/>
            <person name="Sanders M."/>
            <person name="Ma J."/>
            <person name="Kohara Y."/>
            <person name="Sharp S."/>
            <person name="Simmonds M.N."/>
            <person name="Spiegler S."/>
            <person name="Tivey A."/>
            <person name="Sugano S."/>
            <person name="White B."/>
            <person name="Walker D."/>
            <person name="Woodward J.R."/>
            <person name="Winckler T."/>
            <person name="Tanaka Y."/>
            <person name="Shaulsky G."/>
            <person name="Schleicher M."/>
            <person name="Weinstock G.M."/>
            <person name="Rosenthal A."/>
            <person name="Cox E.C."/>
            <person name="Chisholm R.L."/>
            <person name="Gibbs R.A."/>
            <person name="Loomis W.F."/>
            <person name="Platzer M."/>
            <person name="Kay R.R."/>
            <person name="Williams J.G."/>
            <person name="Dear P.H."/>
            <person name="Noegel A.A."/>
            <person name="Barrell B.G."/>
            <person name="Kuspa A."/>
        </authorList>
    </citation>
    <scope>NUCLEOTIDE SEQUENCE [LARGE SCALE GENOMIC DNA]</scope>
    <source>
        <strain>AX4</strain>
    </source>
</reference>
<reference key="3">
    <citation type="journal article" date="2000" name="Microbiology">
        <title>Molecular basis for resistance to the anticancer drug cisplatin in Dictyostelium.</title>
        <authorList>
            <person name="Li G."/>
            <person name="Alexander H."/>
            <person name="Schneider N."/>
            <person name="Alexander S."/>
        </authorList>
    </citation>
    <scope>DISRUPTION PHENOTYPE</scope>
    <source>
        <strain>AX4</strain>
    </source>
</reference>
<reference key="4">
    <citation type="journal article" date="2004" name="Eur. J. Cell Biol.">
        <title>GFP-golvesin constructs to study Golgi tubulation and post-Golgi vesicle dynamics in phagocytosis.</title>
        <authorList>
            <person name="Gerisch G."/>
            <person name="Benjak A."/>
            <person name="Koehler J."/>
            <person name="Weber I."/>
            <person name="Schneider N."/>
        </authorList>
    </citation>
    <scope>MUTAGENESIS OF 9-LEU--LEU-10</scope>
    <scope>TARGETING SIGNALS WITHIN PROTEIN</scope>
    <source>
        <strain>AX2</strain>
    </source>
</reference>
<proteinExistence type="evidence at protein level"/>
<gene>
    <name type="primary">gol</name>
    <name type="ORF">DDB_G0287271</name>
</gene>
<organism>
    <name type="scientific">Dictyostelium discoideum</name>
    <name type="common">Social amoeba</name>
    <dbReference type="NCBI Taxonomy" id="44689"/>
    <lineage>
        <taxon>Eukaryota</taxon>
        <taxon>Amoebozoa</taxon>
        <taxon>Evosea</taxon>
        <taxon>Eumycetozoa</taxon>
        <taxon>Dictyostelia</taxon>
        <taxon>Dictyosteliales</taxon>
        <taxon>Dictyosteliaceae</taxon>
        <taxon>Dictyostelium</taxon>
    </lineage>
</organism>
<protein>
    <recommendedName>
        <fullName>Golvesin</fullName>
    </recommendedName>
</protein>
<name>GOL_DICDI</name>